<sequence length="127" mass="14729">MLLPGRRPWALHSFCFYVLVLAWVVACQQEVPTGSPSPPPGRASGLWGLVRGKVKEFMEPLVTKTRERWRWFWGPSAFQGFMQTYYDDHLRDLRPRAQAWLRSSKESLLNKAYNMCPQLLCRDGDQG</sequence>
<keyword id="KW-0445">Lipid transport</keyword>
<keyword id="KW-0964">Secreted</keyword>
<keyword id="KW-0732">Signal</keyword>
<keyword id="KW-0813">Transport</keyword>
<accession>P0DTH0</accession>
<feature type="signal peptide" evidence="2">
    <location>
        <begin position="1"/>
        <end position="27"/>
    </location>
</feature>
<feature type="chain" id="PRO_0000452522" description="Apolipoprotein C-IV">
    <location>
        <begin position="28"/>
        <end position="127"/>
    </location>
</feature>
<dbReference type="EMBL" id="JABWHU010001658">
    <property type="status" value="NOT_ANNOTATED_CDS"/>
    <property type="molecule type" value="Genomic_DNA"/>
</dbReference>
<dbReference type="GO" id="GO:0034364">
    <property type="term" value="C:high-density lipoprotein particle"/>
    <property type="evidence" value="ECO:0007669"/>
    <property type="project" value="TreeGrafter"/>
</dbReference>
<dbReference type="GO" id="GO:0034361">
    <property type="term" value="C:very-low-density lipoprotein particle"/>
    <property type="evidence" value="ECO:0007669"/>
    <property type="project" value="TreeGrafter"/>
</dbReference>
<dbReference type="GO" id="GO:0006869">
    <property type="term" value="P:lipid transport"/>
    <property type="evidence" value="ECO:0007669"/>
    <property type="project" value="UniProtKB-KW"/>
</dbReference>
<dbReference type="GO" id="GO:0010890">
    <property type="term" value="P:positive regulation of triglyceride storage"/>
    <property type="evidence" value="ECO:0007669"/>
    <property type="project" value="TreeGrafter"/>
</dbReference>
<dbReference type="GO" id="GO:0070328">
    <property type="term" value="P:triglyceride homeostasis"/>
    <property type="evidence" value="ECO:0007669"/>
    <property type="project" value="TreeGrafter"/>
</dbReference>
<dbReference type="InterPro" id="IPR028120">
    <property type="entry name" value="APOC4"/>
</dbReference>
<dbReference type="PANTHER" id="PTHR32288">
    <property type="entry name" value="APOLIPOPROTEIN C-IV"/>
    <property type="match status" value="1"/>
</dbReference>
<dbReference type="PANTHER" id="PTHR32288:SF0">
    <property type="entry name" value="APOLIPOPROTEIN C-IV"/>
    <property type="match status" value="1"/>
</dbReference>
<dbReference type="Pfam" id="PF15119">
    <property type="entry name" value="APOC4"/>
    <property type="match status" value="1"/>
</dbReference>
<organism>
    <name type="scientific">Dicerorhinus sumatrensis harrissoni</name>
    <name type="common">Bornean rhinoceros</name>
    <dbReference type="NCBI Taxonomy" id="310711"/>
    <lineage>
        <taxon>Eukaryota</taxon>
        <taxon>Metazoa</taxon>
        <taxon>Chordata</taxon>
        <taxon>Craniata</taxon>
        <taxon>Vertebrata</taxon>
        <taxon>Euteleostomi</taxon>
        <taxon>Mammalia</taxon>
        <taxon>Eutheria</taxon>
        <taxon>Laurasiatheria</taxon>
        <taxon>Perissodactyla</taxon>
        <taxon>Rhinocerotidae</taxon>
        <taxon>Dicerorhinus</taxon>
    </lineage>
</organism>
<gene>
    <name type="primary">APOC4</name>
</gene>
<evidence type="ECO:0000250" key="1"/>
<evidence type="ECO:0000255" key="2"/>
<evidence type="ECO:0000305" key="3"/>
<protein>
    <recommendedName>
        <fullName>Apolipoprotein C-IV</fullName>
        <shortName>Apo-CIV</shortName>
        <shortName>ApoC-IV</shortName>
    </recommendedName>
    <alternativeName>
        <fullName>Apolipoprotein C4</fullName>
    </alternativeName>
</protein>
<name>APOC4_DICSH</name>
<comment type="function">
    <text evidence="1">May participate in lipoprotein metabolism.</text>
</comment>
<comment type="subcellular location">
    <subcellularLocation>
        <location evidence="1">Secreted</location>
    </subcellularLocation>
</comment>
<comment type="similarity">
    <text evidence="3">Belongs to the apolipoprotein C4 family.</text>
</comment>
<proteinExistence type="inferred from homology"/>
<reference key="1">
    <citation type="journal article" date="2020" name="Curr. Biol.">
        <title>Pre-extinction Demographic Stability and Genomic Signatures of Adaptation in the Woolly Rhinoceros.</title>
        <authorList>
            <person name="Lord E."/>
            <person name="Dussex N."/>
            <person name="Kierczak M."/>
            <person name="Diez-Del-Molino D."/>
            <person name="Ryder O.A."/>
            <person name="Stanton D.W.G."/>
            <person name="Gilbert M.T.P."/>
            <person name="Sanchez-Barreiro F."/>
            <person name="Zhang G."/>
            <person name="Sinding M.S."/>
            <person name="Lorenzen E.D."/>
            <person name="Willerslev E."/>
            <person name="Protopopov A."/>
            <person name="Shidlovskiy F."/>
            <person name="Fedorov S."/>
            <person name="Bocherens H."/>
            <person name="Nathan S.K.S.S."/>
            <person name="Goossens B."/>
            <person name="van der Plicht J."/>
            <person name="Chan Y.L."/>
            <person name="Prost S."/>
            <person name="Potapova O."/>
            <person name="Kirillova I."/>
            <person name="Lister A.M."/>
            <person name="Heintzman P.D."/>
            <person name="Kapp J.D."/>
            <person name="Shapiro B."/>
            <person name="Vartanyan S."/>
            <person name="Goetherstroem A."/>
            <person name="Dalen L."/>
        </authorList>
    </citation>
    <scope>NUCLEOTIDE SEQUENCE [LARGE SCALE GENOMIC DNA]</scope>
</reference>
<reference key="2">
    <citation type="unpublished observations" date="2021-01">
        <authorList>
            <person name="Puppione D.L."/>
        </authorList>
    </citation>
    <scope>IDENTIFICATION</scope>
</reference>